<accession>P08369</accession>
<accession>Q2M5R7</accession>
<gene>
    <name type="primary">creD</name>
    <name type="synonym">cet</name>
    <name type="ordered locus">b4400</name>
    <name type="ordered locus">JW4363</name>
</gene>
<name>CRED_ECOLI</name>
<sequence>MLKSPLFWKMTSLFGAVLLLLIPIMLIRQVIVERADYRSDVEDAIRQSTSGPQKLVGPLIAIPVTELYTVQEEDKTVERKRSFIHFWLPESLMVDGNQNVEERKIGIYTGQVWHSDLTLKADFDVSRLSELNAPNITLGKPFIVISVGDARGIGVVKAPEVNGTALTIEPGTGLEQGGQGVHIPLPEGDWRKQNLKLNMALNLSGTGDLSVVPGGRNSEMTLTSNWPHPSFLGDFLPAKREVSESGFQAHWQSSWFANNLGERFASGNDTGWENFPAFSVAVTTPADQYQLTDRATKYAILLIALTFMAFFVFETLTAQRLHPMQYLLVGLSLVMFYLLLLALSEHTGFTVAWIIASLIGAIMNGIYLQAVLKGWCNSMLFTLALLLLDGVMWGLLNSADSALLLGTSVLVVALAGMMFVTRNIDWYAFSLPKMKASKEVTTDDELRIWK</sequence>
<dbReference type="EMBL" id="M13608">
    <property type="protein sequence ID" value="AAA24376.1"/>
    <property type="molecule type" value="Genomic_DNA"/>
</dbReference>
<dbReference type="EMBL" id="Y00538">
    <property type="protein sequence ID" value="CAA68602.1"/>
    <property type="molecule type" value="Genomic_DNA"/>
</dbReference>
<dbReference type="EMBL" id="U14003">
    <property type="protein sequence ID" value="AAA97296.1"/>
    <property type="molecule type" value="Genomic_DNA"/>
</dbReference>
<dbReference type="EMBL" id="U00096">
    <property type="protein sequence ID" value="AAC77353.1"/>
    <property type="molecule type" value="Genomic_DNA"/>
</dbReference>
<dbReference type="EMBL" id="AP009048">
    <property type="protein sequence ID" value="BAE78389.1"/>
    <property type="molecule type" value="Genomic_DNA"/>
</dbReference>
<dbReference type="PIR" id="D25038">
    <property type="entry name" value="BVECCT"/>
</dbReference>
<dbReference type="RefSeq" id="NP_418817.1">
    <property type="nucleotide sequence ID" value="NC_000913.3"/>
</dbReference>
<dbReference type="RefSeq" id="WP_000920294.1">
    <property type="nucleotide sequence ID" value="NZ_LN832404.1"/>
</dbReference>
<dbReference type="BioGRID" id="4262782">
    <property type="interactions" value="8"/>
</dbReference>
<dbReference type="FunCoup" id="P08369">
    <property type="interactions" value="94"/>
</dbReference>
<dbReference type="STRING" id="511145.b4400"/>
<dbReference type="PaxDb" id="511145-b4400"/>
<dbReference type="EnsemblBacteria" id="AAC77353">
    <property type="protein sequence ID" value="AAC77353"/>
    <property type="gene ID" value="b4400"/>
</dbReference>
<dbReference type="GeneID" id="948868"/>
<dbReference type="KEGG" id="ecj:JW4363"/>
<dbReference type="KEGG" id="eco:b4400"/>
<dbReference type="KEGG" id="ecoc:C3026_23775"/>
<dbReference type="PATRIC" id="fig|1411691.4.peg.2284"/>
<dbReference type="EchoBASE" id="EB0143"/>
<dbReference type="eggNOG" id="COG4452">
    <property type="taxonomic scope" value="Bacteria"/>
</dbReference>
<dbReference type="HOGENOM" id="CLU_036281_1_0_6"/>
<dbReference type="InParanoid" id="P08369"/>
<dbReference type="OMA" id="ANWPHPS"/>
<dbReference type="OrthoDB" id="9791851at2"/>
<dbReference type="PhylomeDB" id="P08369"/>
<dbReference type="BioCyc" id="EcoCyc:EG10145-MONOMER"/>
<dbReference type="PRO" id="PR:P08369"/>
<dbReference type="Proteomes" id="UP000000625">
    <property type="component" value="Chromosome"/>
</dbReference>
<dbReference type="GO" id="GO:0005886">
    <property type="term" value="C:plasma membrane"/>
    <property type="evidence" value="ECO:0000314"/>
    <property type="project" value="EcoCyc"/>
</dbReference>
<dbReference type="InterPro" id="IPR010364">
    <property type="entry name" value="Uncharacterised_IM_CreD"/>
</dbReference>
<dbReference type="NCBIfam" id="NF008712">
    <property type="entry name" value="PRK11715.1-1"/>
    <property type="match status" value="1"/>
</dbReference>
<dbReference type="PANTHER" id="PTHR30092">
    <property type="entry name" value="INNER MEMBRANE PROTEIN CRED"/>
    <property type="match status" value="1"/>
</dbReference>
<dbReference type="PANTHER" id="PTHR30092:SF0">
    <property type="entry name" value="INNER MEMBRANE PROTEIN CRED"/>
    <property type="match status" value="1"/>
</dbReference>
<dbReference type="Pfam" id="PF06123">
    <property type="entry name" value="CreD"/>
    <property type="match status" value="1"/>
</dbReference>
<dbReference type="PIRSF" id="PIRSF004548">
    <property type="entry name" value="CreD"/>
    <property type="match status" value="1"/>
</dbReference>
<protein>
    <recommendedName>
        <fullName>Inner membrane protein CreD</fullName>
    </recommendedName>
</protein>
<organism>
    <name type="scientific">Escherichia coli (strain K12)</name>
    <dbReference type="NCBI Taxonomy" id="83333"/>
    <lineage>
        <taxon>Bacteria</taxon>
        <taxon>Pseudomonadati</taxon>
        <taxon>Pseudomonadota</taxon>
        <taxon>Gammaproteobacteria</taxon>
        <taxon>Enterobacterales</taxon>
        <taxon>Enterobacteriaceae</taxon>
        <taxon>Escherichia</taxon>
    </lineage>
</organism>
<proteinExistence type="evidence at protein level"/>
<feature type="chain" id="PRO_0000079345" description="Inner membrane protein CreD">
    <location>
        <begin position="1"/>
        <end position="450"/>
    </location>
</feature>
<feature type="topological domain" description="Cytoplasmic" evidence="1">
    <location>
        <begin position="1"/>
        <end position="6"/>
    </location>
</feature>
<feature type="transmembrane region" description="Helical" evidence="1">
    <location>
        <begin position="7"/>
        <end position="27"/>
    </location>
</feature>
<feature type="topological domain" description="Periplasmic" evidence="1">
    <location>
        <begin position="28"/>
        <end position="297"/>
    </location>
</feature>
<feature type="transmembrane region" description="Helical" evidence="1">
    <location>
        <begin position="298"/>
        <end position="318"/>
    </location>
</feature>
<feature type="topological domain" description="Cytoplasmic" evidence="1">
    <location>
        <begin position="319"/>
        <end position="322"/>
    </location>
</feature>
<feature type="transmembrane region" description="Helical" evidence="1">
    <location>
        <begin position="323"/>
        <end position="343"/>
    </location>
</feature>
<feature type="topological domain" description="Periplasmic" evidence="1">
    <location>
        <begin position="344"/>
        <end position="347"/>
    </location>
</feature>
<feature type="transmembrane region" description="Helical" evidence="1">
    <location>
        <begin position="348"/>
        <end position="368"/>
    </location>
</feature>
<feature type="topological domain" description="Cytoplasmic" evidence="1">
    <location>
        <begin position="369"/>
        <end position="378"/>
    </location>
</feature>
<feature type="transmembrane region" description="Helical" evidence="1">
    <location>
        <begin position="379"/>
        <end position="399"/>
    </location>
</feature>
<feature type="topological domain" description="Periplasmic" evidence="1">
    <location>
        <position position="400"/>
    </location>
</feature>
<feature type="transmembrane region" description="Helical" evidence="1">
    <location>
        <begin position="401"/>
        <end position="421"/>
    </location>
</feature>
<feature type="topological domain" description="Cytoplasmic" evidence="1">
    <location>
        <begin position="422"/>
        <end position="450"/>
    </location>
</feature>
<reference key="1">
    <citation type="journal article" date="1988" name="Mol. Microbiol.">
        <title>Identification and sequencing of the Escherichia coli cet gene which codes for an inner membrane protein, mutation of which causes tolerance to colicin E2.</title>
        <authorList>
            <person name="Drury L.S."/>
            <person name="Buxton R.S."/>
        </authorList>
    </citation>
    <scope>NUCLEOTIDE SEQUENCE [GENOMIC DNA]</scope>
    <source>
        <strain>K12</strain>
    </source>
</reference>
<reference key="2">
    <citation type="journal article" date="1986" name="J. Bacteriol.">
        <title>Nucleotide sequence of the phoM region of Escherichia coli: four open reading frames may constitute an operon.</title>
        <authorList>
            <person name="Amemura M."/>
            <person name="Makino K."/>
            <person name="Shinagawa H."/>
            <person name="Nakata A."/>
        </authorList>
    </citation>
    <scope>NUCLEOTIDE SEQUENCE [GENOMIC DNA]</scope>
</reference>
<reference key="3">
    <citation type="journal article" date="1995" name="Nucleic Acids Res.">
        <title>Analysis of the Escherichia coli genome VI: DNA sequence of the region from 92.8 through 100 minutes.</title>
        <authorList>
            <person name="Burland V.D."/>
            <person name="Plunkett G. III"/>
            <person name="Sofia H.J."/>
            <person name="Daniels D.L."/>
            <person name="Blattner F.R."/>
        </authorList>
    </citation>
    <scope>NUCLEOTIDE SEQUENCE [LARGE SCALE GENOMIC DNA]</scope>
    <source>
        <strain>K12 / MG1655 / ATCC 47076</strain>
    </source>
</reference>
<reference key="4">
    <citation type="journal article" date="1997" name="Science">
        <title>The complete genome sequence of Escherichia coli K-12.</title>
        <authorList>
            <person name="Blattner F.R."/>
            <person name="Plunkett G. III"/>
            <person name="Bloch C.A."/>
            <person name="Perna N.T."/>
            <person name="Burland V."/>
            <person name="Riley M."/>
            <person name="Collado-Vides J."/>
            <person name="Glasner J.D."/>
            <person name="Rode C.K."/>
            <person name="Mayhew G.F."/>
            <person name="Gregor J."/>
            <person name="Davis N.W."/>
            <person name="Kirkpatrick H.A."/>
            <person name="Goeden M.A."/>
            <person name="Rose D.J."/>
            <person name="Mau B."/>
            <person name="Shao Y."/>
        </authorList>
    </citation>
    <scope>NUCLEOTIDE SEQUENCE [LARGE SCALE GENOMIC DNA]</scope>
    <source>
        <strain>K12 / MG1655 / ATCC 47076</strain>
    </source>
</reference>
<reference key="5">
    <citation type="journal article" date="2006" name="Mol. Syst. Biol.">
        <title>Highly accurate genome sequences of Escherichia coli K-12 strains MG1655 and W3110.</title>
        <authorList>
            <person name="Hayashi K."/>
            <person name="Morooka N."/>
            <person name="Yamamoto Y."/>
            <person name="Fujita K."/>
            <person name="Isono K."/>
            <person name="Choi S."/>
            <person name="Ohtsubo E."/>
            <person name="Baba T."/>
            <person name="Wanner B.L."/>
            <person name="Mori H."/>
            <person name="Horiuchi T."/>
        </authorList>
    </citation>
    <scope>NUCLEOTIDE SEQUENCE [LARGE SCALE GENOMIC DNA]</scope>
    <source>
        <strain>K12 / W3110 / ATCC 27325 / DSM 5911</strain>
    </source>
</reference>
<reference key="6">
    <citation type="journal article" date="1985" name="J. Biol. Chem.">
        <title>DNA sequence analysis of the dye gene of Escherichia coli reveals amino acid homology between the dye and OmpR proteins.</title>
        <authorList>
            <person name="Drury L.S."/>
            <person name="Buxton R.S."/>
        </authorList>
    </citation>
    <scope>NUCLEOTIDE SEQUENCE [GENOMIC DNA] OF 254-450</scope>
</reference>
<reference key="7">
    <citation type="journal article" date="2005" name="Science">
        <title>Global topology analysis of the Escherichia coli inner membrane proteome.</title>
        <authorList>
            <person name="Daley D.O."/>
            <person name="Rapp M."/>
            <person name="Granseth E."/>
            <person name="Melen K."/>
            <person name="Drew D."/>
            <person name="von Heijne G."/>
        </authorList>
    </citation>
    <scope>TOPOLOGY [LARGE SCALE ANALYSIS]</scope>
    <source>
        <strain>K12 / MG1655 / ATCC 47076</strain>
    </source>
</reference>
<keyword id="KW-0997">Cell inner membrane</keyword>
<keyword id="KW-1003">Cell membrane</keyword>
<keyword id="KW-0472">Membrane</keyword>
<keyword id="KW-1185">Reference proteome</keyword>
<keyword id="KW-0812">Transmembrane</keyword>
<keyword id="KW-1133">Transmembrane helix</keyword>
<evidence type="ECO:0000255" key="1"/>
<comment type="subcellular location">
    <subcellularLocation>
        <location>Cell inner membrane</location>
        <topology>Multi-pass membrane protein</topology>
    </subcellularLocation>
</comment>
<comment type="miscellaneous">
    <text>Mutations of this gene leads to an enhanced transcription of the gene cause tolerance to colicin E2.</text>
</comment>